<dbReference type="EC" id="6.1.1.3" evidence="1"/>
<dbReference type="EMBL" id="CP000270">
    <property type="protein sequence ID" value="ABE31582.1"/>
    <property type="molecule type" value="Genomic_DNA"/>
</dbReference>
<dbReference type="RefSeq" id="WP_011489149.1">
    <property type="nucleotide sequence ID" value="NC_007951.1"/>
</dbReference>
<dbReference type="SMR" id="Q13WF7"/>
<dbReference type="STRING" id="266265.Bxe_A1371"/>
<dbReference type="KEGG" id="bxb:DR64_3533"/>
<dbReference type="KEGG" id="bxe:Bxe_A1371"/>
<dbReference type="PATRIC" id="fig|266265.5.peg.3199"/>
<dbReference type="eggNOG" id="COG0441">
    <property type="taxonomic scope" value="Bacteria"/>
</dbReference>
<dbReference type="OrthoDB" id="9802304at2"/>
<dbReference type="Proteomes" id="UP000001817">
    <property type="component" value="Chromosome 1"/>
</dbReference>
<dbReference type="GO" id="GO:0005829">
    <property type="term" value="C:cytosol"/>
    <property type="evidence" value="ECO:0007669"/>
    <property type="project" value="TreeGrafter"/>
</dbReference>
<dbReference type="GO" id="GO:0005524">
    <property type="term" value="F:ATP binding"/>
    <property type="evidence" value="ECO:0007669"/>
    <property type="project" value="UniProtKB-UniRule"/>
</dbReference>
<dbReference type="GO" id="GO:0046872">
    <property type="term" value="F:metal ion binding"/>
    <property type="evidence" value="ECO:0007669"/>
    <property type="project" value="UniProtKB-KW"/>
</dbReference>
<dbReference type="GO" id="GO:0004829">
    <property type="term" value="F:threonine-tRNA ligase activity"/>
    <property type="evidence" value="ECO:0007669"/>
    <property type="project" value="UniProtKB-UniRule"/>
</dbReference>
<dbReference type="GO" id="GO:0000049">
    <property type="term" value="F:tRNA binding"/>
    <property type="evidence" value="ECO:0007669"/>
    <property type="project" value="UniProtKB-KW"/>
</dbReference>
<dbReference type="GO" id="GO:0006435">
    <property type="term" value="P:threonyl-tRNA aminoacylation"/>
    <property type="evidence" value="ECO:0007669"/>
    <property type="project" value="UniProtKB-UniRule"/>
</dbReference>
<dbReference type="CDD" id="cd01667">
    <property type="entry name" value="TGS_ThrRS"/>
    <property type="match status" value="1"/>
</dbReference>
<dbReference type="CDD" id="cd00860">
    <property type="entry name" value="ThrRS_anticodon"/>
    <property type="match status" value="1"/>
</dbReference>
<dbReference type="CDD" id="cd00771">
    <property type="entry name" value="ThrRS_core"/>
    <property type="match status" value="1"/>
</dbReference>
<dbReference type="FunFam" id="3.10.20.30:FF:000005">
    <property type="entry name" value="Threonine--tRNA ligase"/>
    <property type="match status" value="1"/>
</dbReference>
<dbReference type="FunFam" id="3.30.54.20:FF:000002">
    <property type="entry name" value="Threonine--tRNA ligase"/>
    <property type="match status" value="1"/>
</dbReference>
<dbReference type="FunFam" id="3.30.930.10:FF:000002">
    <property type="entry name" value="Threonine--tRNA ligase"/>
    <property type="match status" value="1"/>
</dbReference>
<dbReference type="FunFam" id="3.40.50.800:FF:000001">
    <property type="entry name" value="Threonine--tRNA ligase"/>
    <property type="match status" value="1"/>
</dbReference>
<dbReference type="FunFam" id="3.30.980.10:FF:000005">
    <property type="entry name" value="Threonyl-tRNA synthetase, mitochondrial"/>
    <property type="match status" value="1"/>
</dbReference>
<dbReference type="Gene3D" id="3.10.20.30">
    <property type="match status" value="1"/>
</dbReference>
<dbReference type="Gene3D" id="3.30.54.20">
    <property type="match status" value="1"/>
</dbReference>
<dbReference type="Gene3D" id="3.40.50.800">
    <property type="entry name" value="Anticodon-binding domain"/>
    <property type="match status" value="1"/>
</dbReference>
<dbReference type="Gene3D" id="3.30.930.10">
    <property type="entry name" value="Bira Bifunctional Protein, Domain 2"/>
    <property type="match status" value="1"/>
</dbReference>
<dbReference type="Gene3D" id="3.30.980.10">
    <property type="entry name" value="Threonyl-trna Synthetase, Chain A, domain 2"/>
    <property type="match status" value="1"/>
</dbReference>
<dbReference type="HAMAP" id="MF_00184">
    <property type="entry name" value="Thr_tRNA_synth"/>
    <property type="match status" value="1"/>
</dbReference>
<dbReference type="InterPro" id="IPR002314">
    <property type="entry name" value="aa-tRNA-synt_IIb"/>
</dbReference>
<dbReference type="InterPro" id="IPR006195">
    <property type="entry name" value="aa-tRNA-synth_II"/>
</dbReference>
<dbReference type="InterPro" id="IPR045864">
    <property type="entry name" value="aa-tRNA-synth_II/BPL/LPL"/>
</dbReference>
<dbReference type="InterPro" id="IPR004154">
    <property type="entry name" value="Anticodon-bd"/>
</dbReference>
<dbReference type="InterPro" id="IPR036621">
    <property type="entry name" value="Anticodon-bd_dom_sf"/>
</dbReference>
<dbReference type="InterPro" id="IPR012675">
    <property type="entry name" value="Beta-grasp_dom_sf"/>
</dbReference>
<dbReference type="InterPro" id="IPR004095">
    <property type="entry name" value="TGS"/>
</dbReference>
<dbReference type="InterPro" id="IPR012676">
    <property type="entry name" value="TGS-like"/>
</dbReference>
<dbReference type="InterPro" id="IPR002320">
    <property type="entry name" value="Thr-tRNA-ligase_IIa"/>
</dbReference>
<dbReference type="InterPro" id="IPR018163">
    <property type="entry name" value="Thr/Ala-tRNA-synth_IIc_edit"/>
</dbReference>
<dbReference type="InterPro" id="IPR047246">
    <property type="entry name" value="ThrRS_anticodon"/>
</dbReference>
<dbReference type="InterPro" id="IPR033728">
    <property type="entry name" value="ThrRS_core"/>
</dbReference>
<dbReference type="InterPro" id="IPR012947">
    <property type="entry name" value="tRNA_SAD"/>
</dbReference>
<dbReference type="NCBIfam" id="TIGR00418">
    <property type="entry name" value="thrS"/>
    <property type="match status" value="1"/>
</dbReference>
<dbReference type="PANTHER" id="PTHR11451:SF44">
    <property type="entry name" value="THREONINE--TRNA LIGASE, CHLOROPLASTIC_MITOCHONDRIAL 2"/>
    <property type="match status" value="1"/>
</dbReference>
<dbReference type="PANTHER" id="PTHR11451">
    <property type="entry name" value="THREONINE-TRNA LIGASE"/>
    <property type="match status" value="1"/>
</dbReference>
<dbReference type="Pfam" id="PF03129">
    <property type="entry name" value="HGTP_anticodon"/>
    <property type="match status" value="1"/>
</dbReference>
<dbReference type="Pfam" id="PF02824">
    <property type="entry name" value="TGS"/>
    <property type="match status" value="1"/>
</dbReference>
<dbReference type="Pfam" id="PF00587">
    <property type="entry name" value="tRNA-synt_2b"/>
    <property type="match status" value="1"/>
</dbReference>
<dbReference type="Pfam" id="PF07973">
    <property type="entry name" value="tRNA_SAD"/>
    <property type="match status" value="1"/>
</dbReference>
<dbReference type="PRINTS" id="PR01047">
    <property type="entry name" value="TRNASYNTHTHR"/>
</dbReference>
<dbReference type="SMART" id="SM00863">
    <property type="entry name" value="tRNA_SAD"/>
    <property type="match status" value="1"/>
</dbReference>
<dbReference type="SUPFAM" id="SSF52954">
    <property type="entry name" value="Class II aaRS ABD-related"/>
    <property type="match status" value="1"/>
</dbReference>
<dbReference type="SUPFAM" id="SSF55681">
    <property type="entry name" value="Class II aaRS and biotin synthetases"/>
    <property type="match status" value="1"/>
</dbReference>
<dbReference type="SUPFAM" id="SSF81271">
    <property type="entry name" value="TGS-like"/>
    <property type="match status" value="1"/>
</dbReference>
<dbReference type="SUPFAM" id="SSF55186">
    <property type="entry name" value="ThrRS/AlaRS common domain"/>
    <property type="match status" value="1"/>
</dbReference>
<dbReference type="PROSITE" id="PS50862">
    <property type="entry name" value="AA_TRNA_LIGASE_II"/>
    <property type="match status" value="1"/>
</dbReference>
<dbReference type="PROSITE" id="PS51880">
    <property type="entry name" value="TGS"/>
    <property type="match status" value="1"/>
</dbReference>
<evidence type="ECO:0000255" key="1">
    <source>
        <dbReference type="HAMAP-Rule" id="MF_00184"/>
    </source>
</evidence>
<evidence type="ECO:0000255" key="2">
    <source>
        <dbReference type="PROSITE-ProRule" id="PRU01228"/>
    </source>
</evidence>
<name>SYT_PARXL</name>
<protein>
    <recommendedName>
        <fullName evidence="1">Threonine--tRNA ligase</fullName>
        <ecNumber evidence="1">6.1.1.3</ecNumber>
    </recommendedName>
    <alternativeName>
        <fullName evidence="1">Threonyl-tRNA synthetase</fullName>
        <shortName evidence="1">ThrRS</shortName>
    </alternativeName>
</protein>
<comment type="function">
    <text evidence="1">Catalyzes the attachment of threonine to tRNA(Thr) in a two-step reaction: L-threonine is first activated by ATP to form Thr-AMP and then transferred to the acceptor end of tRNA(Thr). Also edits incorrectly charged L-seryl-tRNA(Thr).</text>
</comment>
<comment type="catalytic activity">
    <reaction evidence="1">
        <text>tRNA(Thr) + L-threonine + ATP = L-threonyl-tRNA(Thr) + AMP + diphosphate + H(+)</text>
        <dbReference type="Rhea" id="RHEA:24624"/>
        <dbReference type="Rhea" id="RHEA-COMP:9670"/>
        <dbReference type="Rhea" id="RHEA-COMP:9704"/>
        <dbReference type="ChEBI" id="CHEBI:15378"/>
        <dbReference type="ChEBI" id="CHEBI:30616"/>
        <dbReference type="ChEBI" id="CHEBI:33019"/>
        <dbReference type="ChEBI" id="CHEBI:57926"/>
        <dbReference type="ChEBI" id="CHEBI:78442"/>
        <dbReference type="ChEBI" id="CHEBI:78534"/>
        <dbReference type="ChEBI" id="CHEBI:456215"/>
        <dbReference type="EC" id="6.1.1.3"/>
    </reaction>
</comment>
<comment type="cofactor">
    <cofactor evidence="1">
        <name>Zn(2+)</name>
        <dbReference type="ChEBI" id="CHEBI:29105"/>
    </cofactor>
    <text evidence="1">Binds 1 zinc ion per subunit.</text>
</comment>
<comment type="subunit">
    <text evidence="1">Homodimer.</text>
</comment>
<comment type="subcellular location">
    <subcellularLocation>
        <location evidence="1">Cytoplasm</location>
    </subcellularLocation>
</comment>
<comment type="similarity">
    <text evidence="1">Belongs to the class-II aminoacyl-tRNA synthetase family.</text>
</comment>
<keyword id="KW-0030">Aminoacyl-tRNA synthetase</keyword>
<keyword id="KW-0067">ATP-binding</keyword>
<keyword id="KW-0963">Cytoplasm</keyword>
<keyword id="KW-0436">Ligase</keyword>
<keyword id="KW-0479">Metal-binding</keyword>
<keyword id="KW-0547">Nucleotide-binding</keyword>
<keyword id="KW-0648">Protein biosynthesis</keyword>
<keyword id="KW-1185">Reference proteome</keyword>
<keyword id="KW-0694">RNA-binding</keyword>
<keyword id="KW-0820">tRNA-binding</keyword>
<keyword id="KW-0862">Zinc</keyword>
<sequence length="635" mass="72212">MVSIRLPDGSVRQYEHPVTVAEVAASIGPGLAKAALGGKIDGELVDTSALIDHDVALAIVTEKDADGLDIIRHSTAHLLAYAVKDLYPEAQVTIGPVIDNGFYYDFAYNRPFTPEDLEKIEKRMQELAKKDEPVSRRVVSRDEAVDYFKSIGEKYKAEIIESIPATDEIKLYSHGGFTDLCRGPHVPSTGKLKVFKLMKVAGAYWRGDSKNEQLQRIYGTAWTKKEDQEAYLHMLEEAEKRDHRKLGKQLDLFHMQDESPGMVFWHPRGWTLWQQVEQYMRRRVNDAGYLEIKTPMIMDRSLWEASGHWQNYRENMFTTESEKRDYAIKPMNCPGHVQVFNHGLRSYRDLPLRYAEFGSCHRNESSGALHGLMRVRGFVQDDAHIFCTEDQFISESIAFNTLAMSVYKDFGFDHVEIKLSLRPDARAGTDETWDRAEQGLREALTACGVTWEELPGEGAFYGPKVEYHIKDALGRSWQCGTLQLDMVLPERLGAEYVAEDNSRRRPIMLHRAIVGSMERFLGILIEHHAGAMPAWLAPMQVVVMNIAESQTEYAQSLAQSLQKQGVRVAADLRNEKISYKIREHTLEKVPYLLVVGDKEREAQTVAVRARGGVDLGVMPLDTFIERLRQDVQSFN</sequence>
<reference key="1">
    <citation type="journal article" date="2006" name="Proc. Natl. Acad. Sci. U.S.A.">
        <title>Burkholderia xenovorans LB400 harbors a multi-replicon, 9.73-Mbp genome shaped for versatility.</title>
        <authorList>
            <person name="Chain P.S.G."/>
            <person name="Denef V.J."/>
            <person name="Konstantinidis K.T."/>
            <person name="Vergez L.M."/>
            <person name="Agullo L."/>
            <person name="Reyes V.L."/>
            <person name="Hauser L."/>
            <person name="Cordova M."/>
            <person name="Gomez L."/>
            <person name="Gonzalez M."/>
            <person name="Land M."/>
            <person name="Lao V."/>
            <person name="Larimer F."/>
            <person name="LiPuma J.J."/>
            <person name="Mahenthiralingam E."/>
            <person name="Malfatti S.A."/>
            <person name="Marx C.J."/>
            <person name="Parnell J.J."/>
            <person name="Ramette A."/>
            <person name="Richardson P."/>
            <person name="Seeger M."/>
            <person name="Smith D."/>
            <person name="Spilker T."/>
            <person name="Sul W.J."/>
            <person name="Tsoi T.V."/>
            <person name="Ulrich L.E."/>
            <person name="Zhulin I.B."/>
            <person name="Tiedje J.M."/>
        </authorList>
    </citation>
    <scope>NUCLEOTIDE SEQUENCE [LARGE SCALE GENOMIC DNA]</scope>
    <source>
        <strain>LB400</strain>
    </source>
</reference>
<feature type="chain" id="PRO_1000020361" description="Threonine--tRNA ligase">
    <location>
        <begin position="1"/>
        <end position="635"/>
    </location>
</feature>
<feature type="domain" description="TGS" evidence="2">
    <location>
        <begin position="1"/>
        <end position="61"/>
    </location>
</feature>
<feature type="region of interest" description="Catalytic" evidence="1">
    <location>
        <begin position="242"/>
        <end position="533"/>
    </location>
</feature>
<feature type="binding site" evidence="1">
    <location>
        <position position="333"/>
    </location>
    <ligand>
        <name>Zn(2+)</name>
        <dbReference type="ChEBI" id="CHEBI:29105"/>
    </ligand>
</feature>
<feature type="binding site" evidence="1">
    <location>
        <position position="384"/>
    </location>
    <ligand>
        <name>Zn(2+)</name>
        <dbReference type="ChEBI" id="CHEBI:29105"/>
    </ligand>
</feature>
<feature type="binding site" evidence="1">
    <location>
        <position position="510"/>
    </location>
    <ligand>
        <name>Zn(2+)</name>
        <dbReference type="ChEBI" id="CHEBI:29105"/>
    </ligand>
</feature>
<accession>Q13WF7</accession>
<organism>
    <name type="scientific">Paraburkholderia xenovorans (strain LB400)</name>
    <dbReference type="NCBI Taxonomy" id="266265"/>
    <lineage>
        <taxon>Bacteria</taxon>
        <taxon>Pseudomonadati</taxon>
        <taxon>Pseudomonadota</taxon>
        <taxon>Betaproteobacteria</taxon>
        <taxon>Burkholderiales</taxon>
        <taxon>Burkholderiaceae</taxon>
        <taxon>Paraburkholderia</taxon>
    </lineage>
</organism>
<gene>
    <name evidence="1" type="primary">thrS</name>
    <name type="ordered locus">Bxeno_A3044</name>
    <name type="ORF">Bxe_A1371</name>
</gene>
<proteinExistence type="inferred from homology"/>